<name>KCY_ECOK1</name>
<keyword id="KW-0067">ATP-binding</keyword>
<keyword id="KW-0963">Cytoplasm</keyword>
<keyword id="KW-0418">Kinase</keyword>
<keyword id="KW-0547">Nucleotide-binding</keyword>
<keyword id="KW-1185">Reference proteome</keyword>
<keyword id="KW-0808">Transferase</keyword>
<feature type="chain" id="PRO_1000048217" description="Cytidylate kinase">
    <location>
        <begin position="1"/>
        <end position="227"/>
    </location>
</feature>
<feature type="binding site" evidence="1">
    <location>
        <begin position="12"/>
        <end position="20"/>
    </location>
    <ligand>
        <name>ATP</name>
        <dbReference type="ChEBI" id="CHEBI:30616"/>
    </ligand>
</feature>
<gene>
    <name evidence="1" type="primary">cmk</name>
    <name type="ordered locus">Ecok1_08330</name>
    <name type="ORF">APECO1_22</name>
</gene>
<dbReference type="EC" id="2.7.4.25" evidence="1"/>
<dbReference type="EMBL" id="CP000468">
    <property type="protein sequence ID" value="ABJ00327.1"/>
    <property type="molecule type" value="Genomic_DNA"/>
</dbReference>
<dbReference type="RefSeq" id="WP_000125016.1">
    <property type="nucleotide sequence ID" value="NZ_CADILS010000016.1"/>
</dbReference>
<dbReference type="SMR" id="A1A9I7"/>
<dbReference type="GeneID" id="93776507"/>
<dbReference type="KEGG" id="ecv:APECO1_22"/>
<dbReference type="HOGENOM" id="CLU_079959_0_2_6"/>
<dbReference type="Proteomes" id="UP000008216">
    <property type="component" value="Chromosome"/>
</dbReference>
<dbReference type="GO" id="GO:0005829">
    <property type="term" value="C:cytosol"/>
    <property type="evidence" value="ECO:0007669"/>
    <property type="project" value="TreeGrafter"/>
</dbReference>
<dbReference type="GO" id="GO:0005524">
    <property type="term" value="F:ATP binding"/>
    <property type="evidence" value="ECO:0007669"/>
    <property type="project" value="UniProtKB-UniRule"/>
</dbReference>
<dbReference type="GO" id="GO:0036430">
    <property type="term" value="F:CMP kinase activity"/>
    <property type="evidence" value="ECO:0007669"/>
    <property type="project" value="RHEA"/>
</dbReference>
<dbReference type="GO" id="GO:0036431">
    <property type="term" value="F:dCMP kinase activity"/>
    <property type="evidence" value="ECO:0007669"/>
    <property type="project" value="RHEA"/>
</dbReference>
<dbReference type="GO" id="GO:0015949">
    <property type="term" value="P:nucleobase-containing small molecule interconversion"/>
    <property type="evidence" value="ECO:0007669"/>
    <property type="project" value="TreeGrafter"/>
</dbReference>
<dbReference type="GO" id="GO:0006220">
    <property type="term" value="P:pyrimidine nucleotide metabolic process"/>
    <property type="evidence" value="ECO:0007669"/>
    <property type="project" value="UniProtKB-UniRule"/>
</dbReference>
<dbReference type="CDD" id="cd02020">
    <property type="entry name" value="CMPK"/>
    <property type="match status" value="1"/>
</dbReference>
<dbReference type="FunFam" id="3.40.50.300:FF:000262">
    <property type="entry name" value="Cytidylate kinase"/>
    <property type="match status" value="1"/>
</dbReference>
<dbReference type="Gene3D" id="3.40.50.300">
    <property type="entry name" value="P-loop containing nucleotide triphosphate hydrolases"/>
    <property type="match status" value="1"/>
</dbReference>
<dbReference type="HAMAP" id="MF_00238">
    <property type="entry name" value="Cytidyl_kinase_type1"/>
    <property type="match status" value="1"/>
</dbReference>
<dbReference type="InterPro" id="IPR003136">
    <property type="entry name" value="Cytidylate_kin"/>
</dbReference>
<dbReference type="InterPro" id="IPR011994">
    <property type="entry name" value="Cytidylate_kinase_dom"/>
</dbReference>
<dbReference type="InterPro" id="IPR027417">
    <property type="entry name" value="P-loop_NTPase"/>
</dbReference>
<dbReference type="NCBIfam" id="TIGR00017">
    <property type="entry name" value="cmk"/>
    <property type="match status" value="1"/>
</dbReference>
<dbReference type="PANTHER" id="PTHR21299:SF2">
    <property type="entry name" value="CYTIDYLATE KINASE"/>
    <property type="match status" value="1"/>
</dbReference>
<dbReference type="PANTHER" id="PTHR21299">
    <property type="entry name" value="CYTIDYLATE KINASE/PANTOATE-BETA-ALANINE LIGASE"/>
    <property type="match status" value="1"/>
</dbReference>
<dbReference type="Pfam" id="PF02224">
    <property type="entry name" value="Cytidylate_kin"/>
    <property type="match status" value="1"/>
</dbReference>
<dbReference type="SUPFAM" id="SSF52540">
    <property type="entry name" value="P-loop containing nucleoside triphosphate hydrolases"/>
    <property type="match status" value="1"/>
</dbReference>
<protein>
    <recommendedName>
        <fullName evidence="1">Cytidylate kinase</fullName>
        <shortName evidence="1">CK</shortName>
        <ecNumber evidence="1">2.7.4.25</ecNumber>
    </recommendedName>
    <alternativeName>
        <fullName evidence="1">Cytidine monophosphate kinase</fullName>
        <shortName evidence="1">CMP kinase</shortName>
    </alternativeName>
</protein>
<sequence>MTAIAPVITIDGPSGAGKGTLCKAMAEALQWHLLDSGAIYRVLALAALHHHVDVASEDALVPLASHLDVRFVSTNGNLEVILEGEDVSGEIRTQEVANAASQVAAFPRVREALLRRQRAFRELPGLIADGRDMGTVVFPDAPVKIFLDASSEERAHRRMLQLQEKGFSVNFERLLAEIKERDDRDRNRAVAPLVPAADALVLDSTTLSIEQVIEKALQYARQKLALA</sequence>
<reference key="1">
    <citation type="journal article" date="2007" name="J. Bacteriol.">
        <title>The genome sequence of avian pathogenic Escherichia coli strain O1:K1:H7 shares strong similarities with human extraintestinal pathogenic E. coli genomes.</title>
        <authorList>
            <person name="Johnson T.J."/>
            <person name="Kariyawasam S."/>
            <person name="Wannemuehler Y."/>
            <person name="Mangiamele P."/>
            <person name="Johnson S.J."/>
            <person name="Doetkott C."/>
            <person name="Skyberg J.A."/>
            <person name="Lynne A.M."/>
            <person name="Johnson J.R."/>
            <person name="Nolan L.K."/>
        </authorList>
    </citation>
    <scope>NUCLEOTIDE SEQUENCE [LARGE SCALE GENOMIC DNA]</scope>
</reference>
<evidence type="ECO:0000255" key="1">
    <source>
        <dbReference type="HAMAP-Rule" id="MF_00238"/>
    </source>
</evidence>
<accession>A1A9I7</accession>
<proteinExistence type="inferred from homology"/>
<comment type="catalytic activity">
    <reaction evidence="1">
        <text>CMP + ATP = CDP + ADP</text>
        <dbReference type="Rhea" id="RHEA:11600"/>
        <dbReference type="ChEBI" id="CHEBI:30616"/>
        <dbReference type="ChEBI" id="CHEBI:58069"/>
        <dbReference type="ChEBI" id="CHEBI:60377"/>
        <dbReference type="ChEBI" id="CHEBI:456216"/>
        <dbReference type="EC" id="2.7.4.25"/>
    </reaction>
</comment>
<comment type="catalytic activity">
    <reaction evidence="1">
        <text>dCMP + ATP = dCDP + ADP</text>
        <dbReference type="Rhea" id="RHEA:25094"/>
        <dbReference type="ChEBI" id="CHEBI:30616"/>
        <dbReference type="ChEBI" id="CHEBI:57566"/>
        <dbReference type="ChEBI" id="CHEBI:58593"/>
        <dbReference type="ChEBI" id="CHEBI:456216"/>
        <dbReference type="EC" id="2.7.4.25"/>
    </reaction>
</comment>
<comment type="subcellular location">
    <subcellularLocation>
        <location evidence="1">Cytoplasm</location>
    </subcellularLocation>
</comment>
<comment type="similarity">
    <text evidence="1">Belongs to the cytidylate kinase family. Type 1 subfamily.</text>
</comment>
<organism>
    <name type="scientific">Escherichia coli O1:K1 / APEC</name>
    <dbReference type="NCBI Taxonomy" id="405955"/>
    <lineage>
        <taxon>Bacteria</taxon>
        <taxon>Pseudomonadati</taxon>
        <taxon>Pseudomonadota</taxon>
        <taxon>Gammaproteobacteria</taxon>
        <taxon>Enterobacterales</taxon>
        <taxon>Enterobacteriaceae</taxon>
        <taxon>Escherichia</taxon>
    </lineage>
</organism>